<feature type="signal peptide" evidence="2">
    <location>
        <begin position="1"/>
        <end position="28"/>
    </location>
</feature>
<feature type="chain" id="PRO_5001867002" description="Evasin P1104" evidence="2">
    <location>
        <begin position="29"/>
        <end position="94"/>
    </location>
</feature>
<feature type="glycosylation site" description="N-linked (GlcNAc...) asparagine" evidence="3">
    <location>
        <position position="51"/>
    </location>
</feature>
<feature type="disulfide bond" evidence="1">
    <location>
        <begin position="48"/>
        <end position="66"/>
    </location>
</feature>
<feature type="disulfide bond" evidence="1">
    <location>
        <begin position="52"/>
        <end position="68"/>
    </location>
</feature>
<feature type="disulfide bond" evidence="1">
    <location>
        <begin position="62"/>
        <end position="79"/>
    </location>
</feature>
<sequence length="94" mass="9856">MASNLFTIFQLAGFVAIVFIVNLHSVSAESKEASASQGPGKSFKVEFCETNCTENNGVWSGCTGDCICVSVGDSKEGRCMDLGDKVIDTPVAQG</sequence>
<organism evidence="7">
    <name type="scientific">Ixodes ricinus</name>
    <name type="common">Common tick</name>
    <name type="synonym">Acarus ricinus</name>
    <dbReference type="NCBI Taxonomy" id="34613"/>
    <lineage>
        <taxon>Eukaryota</taxon>
        <taxon>Metazoa</taxon>
        <taxon>Ecdysozoa</taxon>
        <taxon>Arthropoda</taxon>
        <taxon>Chelicerata</taxon>
        <taxon>Arachnida</taxon>
        <taxon>Acari</taxon>
        <taxon>Parasitiformes</taxon>
        <taxon>Ixodida</taxon>
        <taxon>Ixodoidea</taxon>
        <taxon>Ixodidae</taxon>
        <taxon>Ixodinae</taxon>
        <taxon>Ixodes</taxon>
    </lineage>
</organism>
<reference evidence="7" key="1">
    <citation type="journal article" date="2015" name="PLoS Negl. Trop. Dis.">
        <title>Deep Sequencing Analysis of the Ixodes ricinus Haemocytome.</title>
        <authorList>
            <person name="Kotsyfakis M."/>
            <person name="Kopacek P."/>
            <person name="Franta Z."/>
            <person name="Pedra J.H."/>
            <person name="Ribeiro J.M."/>
        </authorList>
    </citation>
    <scope>NUCLEOTIDE SEQUENCE [LARGE SCALE MRNA]</scope>
</reference>
<reference evidence="6" key="2">
    <citation type="journal article" date="2019" name="J. Biol. Chem.">
        <title>A knottin scaffold directs the CXC-chemokine-binding specificity of tick evasins.</title>
        <authorList>
            <person name="Lee A.W."/>
            <person name="Deruaz M."/>
            <person name="Lynch C."/>
            <person name="Davies G."/>
            <person name="Singh K."/>
            <person name="Alenazi Y."/>
            <person name="Eaton J.R.O."/>
            <person name="Kawamura A."/>
            <person name="Shaw J."/>
            <person name="Proudfoot A.E.I."/>
            <person name="Dias J.M."/>
            <person name="Bhattacharya S."/>
        </authorList>
    </citation>
    <scope>FUNCTION</scope>
</reference>
<protein>
    <recommendedName>
        <fullName evidence="5">Evasin P1104</fullName>
    </recommendedName>
</protein>
<accession>A0A090XA85</accession>
<dbReference type="EMBL" id="GBIH01002795">
    <property type="protein sequence ID" value="JAC91915.1"/>
    <property type="molecule type" value="mRNA"/>
</dbReference>
<dbReference type="SMR" id="A0A090XA85"/>
<dbReference type="GO" id="GO:0005576">
    <property type="term" value="C:extracellular region"/>
    <property type="evidence" value="ECO:0007669"/>
    <property type="project" value="UniProtKB-SubCell"/>
</dbReference>
<dbReference type="GO" id="GO:0019958">
    <property type="term" value="F:C-X-C chemokine binding"/>
    <property type="evidence" value="ECO:0000314"/>
    <property type="project" value="UniProtKB"/>
</dbReference>
<name>E1104_IXORI</name>
<evidence type="ECO:0000250" key="1">
    <source>
        <dbReference type="UniProtKB" id="P0C8E8"/>
    </source>
</evidence>
<evidence type="ECO:0000255" key="2"/>
<evidence type="ECO:0000255" key="3">
    <source>
        <dbReference type="PROSITE-ProRule" id="PRU00498"/>
    </source>
</evidence>
<evidence type="ECO:0000269" key="4">
    <source>
    </source>
</evidence>
<evidence type="ECO:0000303" key="5">
    <source>
    </source>
</evidence>
<evidence type="ECO:0000305" key="6"/>
<evidence type="ECO:0000312" key="7">
    <source>
        <dbReference type="EMBL" id="JAC91915.1"/>
    </source>
</evidence>
<keyword id="KW-1015">Disulfide bond</keyword>
<keyword id="KW-0325">Glycoprotein</keyword>
<keyword id="KW-0964">Secreted</keyword>
<keyword id="KW-0732">Signal</keyword>
<comment type="function">
    <text evidence="4">Salivary chemokine-binding protein which binds to host chemokines CXCL1, CXCL2, CXCL3, CXCL5, CXCL6, CXCL12 and CXCL13.</text>
</comment>
<comment type="subcellular location">
    <subcellularLocation>
        <location evidence="6">Secreted</location>
    </subcellularLocation>
</comment>
<proteinExistence type="inferred from homology"/>